<accession>C3N060</accession>
<name>Y2134_SACI3</name>
<protein>
    <recommendedName>
        <fullName evidence="1">MEMO1 family protein M1627_2134</fullName>
    </recommendedName>
</protein>
<proteinExistence type="inferred from homology"/>
<reference key="1">
    <citation type="journal article" date="2009" name="Proc. Natl. Acad. Sci. U.S.A.">
        <title>Biogeography of the Sulfolobus islandicus pan-genome.</title>
        <authorList>
            <person name="Reno M.L."/>
            <person name="Held N.L."/>
            <person name="Fields C.J."/>
            <person name="Burke P.V."/>
            <person name="Whitaker R.J."/>
        </authorList>
    </citation>
    <scope>NUCLEOTIDE SEQUENCE [LARGE SCALE GENOMIC DNA]</scope>
    <source>
        <strain>M.16.27</strain>
    </source>
</reference>
<dbReference type="EMBL" id="CP001401">
    <property type="protein sequence ID" value="ACP56000.1"/>
    <property type="molecule type" value="Genomic_DNA"/>
</dbReference>
<dbReference type="SMR" id="C3N060"/>
<dbReference type="KEGG" id="sim:M1627_2134"/>
<dbReference type="HOGENOM" id="CLU_038085_2_0_2"/>
<dbReference type="Proteomes" id="UP000002307">
    <property type="component" value="Chromosome"/>
</dbReference>
<dbReference type="CDD" id="cd07361">
    <property type="entry name" value="MEMO_like"/>
    <property type="match status" value="1"/>
</dbReference>
<dbReference type="Gene3D" id="3.40.830.10">
    <property type="entry name" value="LigB-like"/>
    <property type="match status" value="1"/>
</dbReference>
<dbReference type="HAMAP" id="MF_00055">
    <property type="entry name" value="MEMO1"/>
    <property type="match status" value="1"/>
</dbReference>
<dbReference type="InterPro" id="IPR002737">
    <property type="entry name" value="MEMO1_fam"/>
</dbReference>
<dbReference type="NCBIfam" id="TIGR04336">
    <property type="entry name" value="AmmeMemoSam_B"/>
    <property type="match status" value="1"/>
</dbReference>
<dbReference type="PANTHER" id="PTHR11060">
    <property type="entry name" value="PROTEIN MEMO1"/>
    <property type="match status" value="1"/>
</dbReference>
<dbReference type="PANTHER" id="PTHR11060:SF0">
    <property type="entry name" value="PROTEIN MEMO1"/>
    <property type="match status" value="1"/>
</dbReference>
<dbReference type="Pfam" id="PF01875">
    <property type="entry name" value="Memo"/>
    <property type="match status" value="1"/>
</dbReference>
<sequence>MKRLPAVAGSFYESDPKKLKMQIEWSFRHNIGPRDIPKQTYEKKKRDNLFFVVPHAGYIYSGPVAAHSYYYLVSEGRPDVVIILGPNHTGLGSYVSAWPKGEWETPLGSVKIDEEILMQLVKESEVIDLDEKSHLYEHSIEVQLPFLQYFFDDDFKIVPIVIMMQTPEIAEFLADAIYNVMQKNPDKDIVVLASSDMNHYDPHEITVKKDEEAIEKIQQLDYKGLYEVVEGKDVTLCGYGPIMVNLILAKKFGKKAYILKHATSGDTSGPKDSVVGYLAARFGS</sequence>
<comment type="similarity">
    <text evidence="1">Belongs to the MEMO1 family.</text>
</comment>
<gene>
    <name type="ordered locus">M1627_2134</name>
</gene>
<feature type="chain" id="PRO_1000202324" description="MEMO1 family protein M1627_2134">
    <location>
        <begin position="1"/>
        <end position="284"/>
    </location>
</feature>
<evidence type="ECO:0000255" key="1">
    <source>
        <dbReference type="HAMAP-Rule" id="MF_00055"/>
    </source>
</evidence>
<organism>
    <name type="scientific">Saccharolobus islandicus (strain M.16.27)</name>
    <name type="common">Sulfolobus islandicus</name>
    <dbReference type="NCBI Taxonomy" id="427318"/>
    <lineage>
        <taxon>Archaea</taxon>
        <taxon>Thermoproteota</taxon>
        <taxon>Thermoprotei</taxon>
        <taxon>Sulfolobales</taxon>
        <taxon>Sulfolobaceae</taxon>
        <taxon>Saccharolobus</taxon>
    </lineage>
</organism>